<feature type="chain" id="PRO_1000025725" description="Cell division protein FtsB">
    <location>
        <begin position="1"/>
        <end position="99"/>
    </location>
</feature>
<feature type="topological domain" description="Cytoplasmic" evidence="1">
    <location>
        <begin position="1"/>
        <end position="3"/>
    </location>
</feature>
<feature type="transmembrane region" description="Helical" evidence="1">
    <location>
        <begin position="4"/>
        <end position="21"/>
    </location>
</feature>
<feature type="topological domain" description="Periplasmic" evidence="1">
    <location>
        <begin position="22"/>
        <end position="99"/>
    </location>
</feature>
<feature type="coiled-coil region" evidence="1">
    <location>
        <begin position="31"/>
        <end position="73"/>
    </location>
</feature>
<proteinExistence type="inferred from homology"/>
<sequence length="99" mass="11203">MKFFVIALIVLLGLLQYRLWSGDNSLPEYFVLQKQIAAQQEGNAKLNERNQVLKEEIIDLKSGTEAIEERARNELGMVKEGETFYRVVGGDRSVSSPSQ</sequence>
<evidence type="ECO:0000255" key="1">
    <source>
        <dbReference type="HAMAP-Rule" id="MF_00599"/>
    </source>
</evidence>
<name>FTSB_SHESR</name>
<keyword id="KW-0131">Cell cycle</keyword>
<keyword id="KW-0132">Cell division</keyword>
<keyword id="KW-0997">Cell inner membrane</keyword>
<keyword id="KW-1003">Cell membrane</keyword>
<keyword id="KW-0175">Coiled coil</keyword>
<keyword id="KW-0472">Membrane</keyword>
<keyword id="KW-0812">Transmembrane</keyword>
<keyword id="KW-1133">Transmembrane helix</keyword>
<dbReference type="EMBL" id="CP000444">
    <property type="protein sequence ID" value="ABI42186.1"/>
    <property type="molecule type" value="Genomic_DNA"/>
</dbReference>
<dbReference type="SMR" id="Q0HXG9"/>
<dbReference type="KEGG" id="shm:Shewmr7_1187"/>
<dbReference type="HOGENOM" id="CLU_134863_5_2_6"/>
<dbReference type="GO" id="GO:0032153">
    <property type="term" value="C:cell division site"/>
    <property type="evidence" value="ECO:0007669"/>
    <property type="project" value="UniProtKB-UniRule"/>
</dbReference>
<dbReference type="GO" id="GO:0030428">
    <property type="term" value="C:cell septum"/>
    <property type="evidence" value="ECO:0007669"/>
    <property type="project" value="TreeGrafter"/>
</dbReference>
<dbReference type="GO" id="GO:0005886">
    <property type="term" value="C:plasma membrane"/>
    <property type="evidence" value="ECO:0007669"/>
    <property type="project" value="UniProtKB-SubCell"/>
</dbReference>
<dbReference type="GO" id="GO:0043093">
    <property type="term" value="P:FtsZ-dependent cytokinesis"/>
    <property type="evidence" value="ECO:0007669"/>
    <property type="project" value="UniProtKB-UniRule"/>
</dbReference>
<dbReference type="HAMAP" id="MF_00599">
    <property type="entry name" value="FtsB"/>
    <property type="match status" value="1"/>
</dbReference>
<dbReference type="InterPro" id="IPR023081">
    <property type="entry name" value="Cell_div_FtsB"/>
</dbReference>
<dbReference type="InterPro" id="IPR007060">
    <property type="entry name" value="FtsL/DivIC"/>
</dbReference>
<dbReference type="NCBIfam" id="NF002058">
    <property type="entry name" value="PRK00888.1"/>
    <property type="match status" value="1"/>
</dbReference>
<dbReference type="PANTHER" id="PTHR37485">
    <property type="entry name" value="CELL DIVISION PROTEIN FTSB"/>
    <property type="match status" value="1"/>
</dbReference>
<dbReference type="PANTHER" id="PTHR37485:SF1">
    <property type="entry name" value="CELL DIVISION PROTEIN FTSB"/>
    <property type="match status" value="1"/>
</dbReference>
<dbReference type="Pfam" id="PF04977">
    <property type="entry name" value="DivIC"/>
    <property type="match status" value="1"/>
</dbReference>
<comment type="function">
    <text evidence="1">Essential cell division protein. May link together the upstream cell division proteins, which are predominantly cytoplasmic, with the downstream cell division proteins, which are predominantly periplasmic.</text>
</comment>
<comment type="subunit">
    <text evidence="1">Part of a complex composed of FtsB, FtsL and FtsQ.</text>
</comment>
<comment type="subcellular location">
    <subcellularLocation>
        <location evidence="1">Cell inner membrane</location>
        <topology evidence="1">Single-pass type II membrane protein</topology>
    </subcellularLocation>
    <text evidence="1">Localizes to the division septum.</text>
</comment>
<comment type="similarity">
    <text evidence="1">Belongs to the FtsB family.</text>
</comment>
<protein>
    <recommendedName>
        <fullName evidence="1">Cell division protein FtsB</fullName>
    </recommendedName>
</protein>
<reference key="1">
    <citation type="submission" date="2006-08" db="EMBL/GenBank/DDBJ databases">
        <title>Complete sequence of chromosome 1 of Shewanella sp. MR-7.</title>
        <authorList>
            <person name="Copeland A."/>
            <person name="Lucas S."/>
            <person name="Lapidus A."/>
            <person name="Barry K."/>
            <person name="Detter J.C."/>
            <person name="Glavina del Rio T."/>
            <person name="Hammon N."/>
            <person name="Israni S."/>
            <person name="Dalin E."/>
            <person name="Tice H."/>
            <person name="Pitluck S."/>
            <person name="Kiss H."/>
            <person name="Brettin T."/>
            <person name="Bruce D."/>
            <person name="Han C."/>
            <person name="Tapia R."/>
            <person name="Gilna P."/>
            <person name="Schmutz J."/>
            <person name="Larimer F."/>
            <person name="Land M."/>
            <person name="Hauser L."/>
            <person name="Kyrpides N."/>
            <person name="Mikhailova N."/>
            <person name="Nealson K."/>
            <person name="Konstantinidis K."/>
            <person name="Klappenbach J."/>
            <person name="Tiedje J."/>
            <person name="Richardson P."/>
        </authorList>
    </citation>
    <scope>NUCLEOTIDE SEQUENCE [LARGE SCALE GENOMIC DNA]</scope>
    <source>
        <strain>MR-7</strain>
    </source>
</reference>
<organism>
    <name type="scientific">Shewanella sp. (strain MR-7)</name>
    <dbReference type="NCBI Taxonomy" id="60481"/>
    <lineage>
        <taxon>Bacteria</taxon>
        <taxon>Pseudomonadati</taxon>
        <taxon>Pseudomonadota</taxon>
        <taxon>Gammaproteobacteria</taxon>
        <taxon>Alteromonadales</taxon>
        <taxon>Shewanellaceae</taxon>
        <taxon>Shewanella</taxon>
    </lineage>
</organism>
<gene>
    <name evidence="1" type="primary">ftsB</name>
    <name type="ordered locus">Shewmr7_1187</name>
</gene>
<accession>Q0HXG9</accession>